<organism>
    <name type="scientific">Geotalea uraniireducens (strain Rf4)</name>
    <name type="common">Geobacter uraniireducens</name>
    <dbReference type="NCBI Taxonomy" id="351605"/>
    <lineage>
        <taxon>Bacteria</taxon>
        <taxon>Pseudomonadati</taxon>
        <taxon>Thermodesulfobacteriota</taxon>
        <taxon>Desulfuromonadia</taxon>
        <taxon>Geobacterales</taxon>
        <taxon>Geobacteraceae</taxon>
        <taxon>Geotalea</taxon>
    </lineage>
</organism>
<evidence type="ECO:0000255" key="1">
    <source>
        <dbReference type="HAMAP-Rule" id="MF_01398"/>
    </source>
</evidence>
<reference key="1">
    <citation type="submission" date="2007-05" db="EMBL/GenBank/DDBJ databases">
        <title>Complete sequence of Geobacter uraniireducens Rf4.</title>
        <authorList>
            <consortium name="US DOE Joint Genome Institute"/>
            <person name="Copeland A."/>
            <person name="Lucas S."/>
            <person name="Lapidus A."/>
            <person name="Barry K."/>
            <person name="Detter J.C."/>
            <person name="Glavina del Rio T."/>
            <person name="Hammon N."/>
            <person name="Israni S."/>
            <person name="Dalin E."/>
            <person name="Tice H."/>
            <person name="Pitluck S."/>
            <person name="Chertkov O."/>
            <person name="Brettin T."/>
            <person name="Bruce D."/>
            <person name="Han C."/>
            <person name="Schmutz J."/>
            <person name="Larimer F."/>
            <person name="Land M."/>
            <person name="Hauser L."/>
            <person name="Kyrpides N."/>
            <person name="Mikhailova N."/>
            <person name="Shelobolina E."/>
            <person name="Aklujkar M."/>
            <person name="Lovley D."/>
            <person name="Richardson P."/>
        </authorList>
    </citation>
    <scope>NUCLEOTIDE SEQUENCE [LARGE SCALE GENOMIC DNA]</scope>
    <source>
        <strain>ATCC BAA-1134 / JCM 13001 / Rf4</strain>
    </source>
</reference>
<dbReference type="EMBL" id="CP000698">
    <property type="protein sequence ID" value="ABQ28402.1"/>
    <property type="molecule type" value="Genomic_DNA"/>
</dbReference>
<dbReference type="RefSeq" id="WP_011941032.1">
    <property type="nucleotide sequence ID" value="NC_009483.1"/>
</dbReference>
<dbReference type="SMR" id="A5G9D4"/>
<dbReference type="STRING" id="351605.Gura_4259"/>
<dbReference type="KEGG" id="gur:Gura_4259"/>
<dbReference type="HOGENOM" id="CLU_079215_3_2_7"/>
<dbReference type="OrthoDB" id="5471016at2"/>
<dbReference type="Proteomes" id="UP000006695">
    <property type="component" value="Chromosome"/>
</dbReference>
<dbReference type="GO" id="GO:0005886">
    <property type="term" value="C:plasma membrane"/>
    <property type="evidence" value="ECO:0007669"/>
    <property type="project" value="UniProtKB-SubCell"/>
</dbReference>
<dbReference type="GO" id="GO:0045259">
    <property type="term" value="C:proton-transporting ATP synthase complex"/>
    <property type="evidence" value="ECO:0007669"/>
    <property type="project" value="UniProtKB-KW"/>
</dbReference>
<dbReference type="GO" id="GO:0046933">
    <property type="term" value="F:proton-transporting ATP synthase activity, rotational mechanism"/>
    <property type="evidence" value="ECO:0007669"/>
    <property type="project" value="UniProtKB-UniRule"/>
</dbReference>
<dbReference type="CDD" id="cd06503">
    <property type="entry name" value="ATP-synt_Fo_b"/>
    <property type="match status" value="1"/>
</dbReference>
<dbReference type="HAMAP" id="MF_01398">
    <property type="entry name" value="ATP_synth_b_bprime"/>
    <property type="match status" value="1"/>
</dbReference>
<dbReference type="InterPro" id="IPR002146">
    <property type="entry name" value="ATP_synth_b/b'su_bac/chlpt"/>
</dbReference>
<dbReference type="PANTHER" id="PTHR34264">
    <property type="entry name" value="ATP SYNTHASE SUBUNIT B, CHLOROPLASTIC"/>
    <property type="match status" value="1"/>
</dbReference>
<dbReference type="PANTHER" id="PTHR34264:SF3">
    <property type="entry name" value="ATP SYNTHASE SUBUNIT B, CHLOROPLASTIC"/>
    <property type="match status" value="1"/>
</dbReference>
<dbReference type="Pfam" id="PF00430">
    <property type="entry name" value="ATP-synt_B"/>
    <property type="match status" value="1"/>
</dbReference>
<comment type="function">
    <text evidence="1">F(1)F(0) ATP synthase produces ATP from ADP in the presence of a proton or sodium gradient. F-type ATPases consist of two structural domains, F(1) containing the extramembraneous catalytic core and F(0) containing the membrane proton channel, linked together by a central stalk and a peripheral stalk. During catalysis, ATP synthesis in the catalytic domain of F(1) is coupled via a rotary mechanism of the central stalk subunits to proton translocation.</text>
</comment>
<comment type="function">
    <text evidence="1">Component of the F(0) channel, it forms part of the peripheral stalk, linking F(1) to F(0).</text>
</comment>
<comment type="subunit">
    <text evidence="1">F-type ATPases have 2 components, F(1) - the catalytic core - and F(0) - the membrane proton channel. F(1) has five subunits: alpha(3), beta(3), gamma(1), delta(1), epsilon(1). F(0) has three main subunits: a(1), b(2) and c(10-14). The alpha and beta chains form an alternating ring which encloses part of the gamma chain. F(1) is attached to F(0) by a central stalk formed by the gamma and epsilon chains, while a peripheral stalk is formed by the delta and b chains.</text>
</comment>
<comment type="subcellular location">
    <subcellularLocation>
        <location evidence="1">Cell inner membrane</location>
        <topology evidence="1">Single-pass membrane protein</topology>
    </subcellularLocation>
</comment>
<comment type="similarity">
    <text evidence="1">Belongs to the ATPase B chain family.</text>
</comment>
<feature type="chain" id="PRO_5000245497" description="ATP synthase subunit b">
    <location>
        <begin position="1"/>
        <end position="205"/>
    </location>
</feature>
<feature type="transmembrane region" description="Helical" evidence="1">
    <location>
        <begin position="51"/>
        <end position="69"/>
    </location>
</feature>
<gene>
    <name evidence="1" type="primary">atpF</name>
    <name type="ordered locus">Gura_4259</name>
</gene>
<proteinExistence type="inferred from homology"/>
<sequence length="205" mass="22637">MTSTRKSVLTSSSTITVTTCLLLVGLAAAGYASEGGEGAHHVDTAKQMKDFAWRCLDFAVLLAIVVWALKKANVKGSLAERQSNIEKMLKEAVEAKEQAEKKFLEYNEKLEQANKEIEAMSAAMKQEGELEKVRIIAEAKAAAEKVKEQAQQAAHQEILKARIELRDEAARLAVEIAEKKIKENITKNDQDKLVGDYISKVVTLH</sequence>
<keyword id="KW-0066">ATP synthesis</keyword>
<keyword id="KW-0997">Cell inner membrane</keyword>
<keyword id="KW-1003">Cell membrane</keyword>
<keyword id="KW-0138">CF(0)</keyword>
<keyword id="KW-0375">Hydrogen ion transport</keyword>
<keyword id="KW-0406">Ion transport</keyword>
<keyword id="KW-0472">Membrane</keyword>
<keyword id="KW-1185">Reference proteome</keyword>
<keyword id="KW-0812">Transmembrane</keyword>
<keyword id="KW-1133">Transmembrane helix</keyword>
<keyword id="KW-0813">Transport</keyword>
<name>ATPF_GEOUR</name>
<accession>A5G9D4</accession>
<protein>
    <recommendedName>
        <fullName evidence="1">ATP synthase subunit b</fullName>
    </recommendedName>
    <alternativeName>
        <fullName evidence="1">ATP synthase F(0) sector subunit b</fullName>
    </alternativeName>
    <alternativeName>
        <fullName evidence="1">ATPase subunit I</fullName>
    </alternativeName>
    <alternativeName>
        <fullName evidence="1">F-type ATPase subunit b</fullName>
        <shortName evidence="1">F-ATPase subunit b</shortName>
    </alternativeName>
</protein>